<feature type="signal peptide" evidence="1">
    <location>
        <begin position="1"/>
        <end position="23"/>
    </location>
</feature>
<feature type="chain" id="PRO_0000295056" description="Putative cysteine-rich receptor-like protein kinase 9">
    <location>
        <begin position="24"/>
        <end position="265"/>
    </location>
</feature>
<feature type="domain" description="Gnk2-homologous 1" evidence="2">
    <location>
        <begin position="27"/>
        <end position="131"/>
    </location>
</feature>
<feature type="domain" description="Gnk2-homologous 2" evidence="2">
    <location>
        <begin position="142"/>
        <end position="244"/>
    </location>
</feature>
<feature type="glycosylation site" description="N-linked (GlcNAc...) asparagine" evidence="1">
    <location>
        <position position="35"/>
    </location>
</feature>
<feature type="glycosylation site" description="N-linked (GlcNAc...) asparagine" evidence="1">
    <location>
        <position position="60"/>
    </location>
</feature>
<feature type="glycosylation site" description="N-linked (GlcNAc...) asparagine" evidence="1">
    <location>
        <position position="69"/>
    </location>
</feature>
<feature type="glycosylation site" description="N-linked (GlcNAc...) asparagine" evidence="1">
    <location>
        <position position="153"/>
    </location>
</feature>
<feature type="glycosylation site" description="N-linked (GlcNAc...) asparagine" evidence="1">
    <location>
        <position position="177"/>
    </location>
</feature>
<feature type="glycosylation site" description="N-linked (GlcNAc...) asparagine" evidence="1">
    <location>
        <position position="246"/>
    </location>
</feature>
<comment type="subcellular location">
    <subcellularLocation>
        <location evidence="4">Secreted</location>
    </subcellularLocation>
</comment>
<comment type="induction">
    <text evidence="3">By salicylic acid (SA).</text>
</comment>
<comment type="similarity">
    <text evidence="4">Belongs to the protein kinase superfamily. Ser/Thr protein kinase family. CRK subfamily.</text>
</comment>
<comment type="caution">
    <text evidence="4">Lacks the transmembrane and the protein kinase domains, which are conserved features of the CRK subfamily.</text>
</comment>
<comment type="caution">
    <text evidence="4">Could be the product of a pseudogene.</text>
</comment>
<proteinExistence type="uncertain"/>
<dbReference type="EMBL" id="AL022347">
    <property type="protein sequence ID" value="CAA18464.1"/>
    <property type="molecule type" value="Genomic_DNA"/>
</dbReference>
<dbReference type="EMBL" id="AL161558">
    <property type="protein sequence ID" value="CAB79272.1"/>
    <property type="molecule type" value="Genomic_DNA"/>
</dbReference>
<dbReference type="EMBL" id="CP002687">
    <property type="protein sequence ID" value="AEE84718.1"/>
    <property type="molecule type" value="Genomic_DNA"/>
</dbReference>
<dbReference type="EMBL" id="BT002377">
    <property type="protein sequence ID" value="AAO00737.1"/>
    <property type="molecule type" value="mRNA"/>
</dbReference>
<dbReference type="EMBL" id="BT006299">
    <property type="protein sequence ID" value="AAP13407.1"/>
    <property type="molecule type" value="mRNA"/>
</dbReference>
<dbReference type="PIR" id="T04834">
    <property type="entry name" value="T04834"/>
</dbReference>
<dbReference type="RefSeq" id="NP_194048.1">
    <property type="nucleotide sequence ID" value="NM_118446.3"/>
</dbReference>
<dbReference type="SMR" id="O65469"/>
<dbReference type="BioGRID" id="13705">
    <property type="interactions" value="8"/>
</dbReference>
<dbReference type="FunCoup" id="O65469">
    <property type="interactions" value="93"/>
</dbReference>
<dbReference type="IntAct" id="O65469">
    <property type="interactions" value="8"/>
</dbReference>
<dbReference type="STRING" id="3702.O65469"/>
<dbReference type="GlyCosmos" id="O65469">
    <property type="glycosylation" value="6 sites, No reported glycans"/>
</dbReference>
<dbReference type="GlyGen" id="O65469">
    <property type="glycosylation" value="7 sites"/>
</dbReference>
<dbReference type="iPTMnet" id="O65469"/>
<dbReference type="PaxDb" id="3702-AT4G23170.1"/>
<dbReference type="ProteomicsDB" id="222769"/>
<dbReference type="EnsemblPlants" id="AT4G23170.1">
    <property type="protein sequence ID" value="AT4G23170.1"/>
    <property type="gene ID" value="AT4G23170"/>
</dbReference>
<dbReference type="GeneID" id="828416"/>
<dbReference type="Gramene" id="AT4G23170.1">
    <property type="protein sequence ID" value="AT4G23170.1"/>
    <property type="gene ID" value="AT4G23170"/>
</dbReference>
<dbReference type="KEGG" id="ath:AT4G23170"/>
<dbReference type="Araport" id="AT4G23170"/>
<dbReference type="TAIR" id="AT4G23170">
    <property type="gene designation" value="EP1"/>
</dbReference>
<dbReference type="eggNOG" id="ENOG502QWDY">
    <property type="taxonomic scope" value="Eukaryota"/>
</dbReference>
<dbReference type="HOGENOM" id="CLU_000288_35_0_1"/>
<dbReference type="InParanoid" id="O65469"/>
<dbReference type="OMA" id="LMALECN"/>
<dbReference type="OrthoDB" id="688481at2759"/>
<dbReference type="PhylomeDB" id="O65469"/>
<dbReference type="Proteomes" id="UP000006548">
    <property type="component" value="Chromosome 4"/>
</dbReference>
<dbReference type="ExpressionAtlas" id="O65469">
    <property type="expression patterns" value="baseline and differential"/>
</dbReference>
<dbReference type="GO" id="GO:0048046">
    <property type="term" value="C:apoplast"/>
    <property type="evidence" value="ECO:0007005"/>
    <property type="project" value="TAIR"/>
</dbReference>
<dbReference type="GO" id="GO:0099503">
    <property type="term" value="C:secretory vesicle"/>
    <property type="evidence" value="ECO:0007005"/>
    <property type="project" value="TAIR"/>
</dbReference>
<dbReference type="GO" id="GO:0012501">
    <property type="term" value="P:programmed cell death"/>
    <property type="evidence" value="ECO:0000315"/>
    <property type="project" value="TAIR"/>
</dbReference>
<dbReference type="GO" id="GO:0009751">
    <property type="term" value="P:response to salicylic acid"/>
    <property type="evidence" value="ECO:0000270"/>
    <property type="project" value="TAIR"/>
</dbReference>
<dbReference type="GO" id="GO:0009627">
    <property type="term" value="P:systemic acquired resistance"/>
    <property type="evidence" value="ECO:0000270"/>
    <property type="project" value="TAIR"/>
</dbReference>
<dbReference type="CDD" id="cd23509">
    <property type="entry name" value="Gnk2-like"/>
    <property type="match status" value="2"/>
</dbReference>
<dbReference type="FunFam" id="3.30.430.20:FF:000002">
    <property type="entry name" value="Cysteine-rich receptor-like protein kinase 10"/>
    <property type="match status" value="1"/>
</dbReference>
<dbReference type="FunFam" id="3.30.430.20:FF:000003">
    <property type="entry name" value="Cysteine-rich RLK (RECEPTOR-like protein kinase) 10"/>
    <property type="match status" value="1"/>
</dbReference>
<dbReference type="Gene3D" id="3.30.430.20">
    <property type="entry name" value="Gnk2 domain, C-X8-C-X2-C motif"/>
    <property type="match status" value="2"/>
</dbReference>
<dbReference type="InterPro" id="IPR002902">
    <property type="entry name" value="GNK2"/>
</dbReference>
<dbReference type="InterPro" id="IPR038408">
    <property type="entry name" value="GNK2_sf"/>
</dbReference>
<dbReference type="PANTHER" id="PTHR32099:SF42">
    <property type="entry name" value="CYSTEINE-RICH RECEPTOR-LIKE PROTEIN KINASE 9-RELATED"/>
    <property type="match status" value="1"/>
</dbReference>
<dbReference type="PANTHER" id="PTHR32099">
    <property type="entry name" value="CYSTEINE-RICH REPEAT SECRETORY PROTEIN"/>
    <property type="match status" value="1"/>
</dbReference>
<dbReference type="Pfam" id="PF01657">
    <property type="entry name" value="Stress-antifung"/>
    <property type="match status" value="2"/>
</dbReference>
<dbReference type="PROSITE" id="PS51473">
    <property type="entry name" value="GNK2"/>
    <property type="match status" value="2"/>
</dbReference>
<gene>
    <name type="primary">CRK9</name>
    <name type="synonym">EP1</name>
    <name type="ordered locus">At4g23170</name>
    <name type="ORF">F21P8.60</name>
</gene>
<sequence>MSSLISFIFLFLFSFLTSFKASAQDPFYLNHYCPNTTTYSRFSTYSTNLRTLLSSFASRNASYSTGFQNVTVGQTPDLVTGLFLCRGDLSPEVCSNCVAFSVDEALTRCPSQREAVFYYEECILRYSDKNILSTAITNEGEFILSNTNTISPNQSQINQFIVLVQSNMNQAAMEAANSSRKFSTIKTELTELQTLYGLVQCTPDLTSQDCLRCLTRSINRMPLSRIGARQFWPSCNSRYELYSFYNETTIGTPSPPPPPSPSRAN</sequence>
<protein>
    <recommendedName>
        <fullName>Putative cysteine-rich receptor-like protein kinase 9</fullName>
        <shortName>Cysteine-rich RLK9</shortName>
    </recommendedName>
</protein>
<name>CRK9_ARATH</name>
<organism>
    <name type="scientific">Arabidopsis thaliana</name>
    <name type="common">Mouse-ear cress</name>
    <dbReference type="NCBI Taxonomy" id="3702"/>
    <lineage>
        <taxon>Eukaryota</taxon>
        <taxon>Viridiplantae</taxon>
        <taxon>Streptophyta</taxon>
        <taxon>Embryophyta</taxon>
        <taxon>Tracheophyta</taxon>
        <taxon>Spermatophyta</taxon>
        <taxon>Magnoliopsida</taxon>
        <taxon>eudicotyledons</taxon>
        <taxon>Gunneridae</taxon>
        <taxon>Pentapetalae</taxon>
        <taxon>rosids</taxon>
        <taxon>malvids</taxon>
        <taxon>Brassicales</taxon>
        <taxon>Brassicaceae</taxon>
        <taxon>Camelineae</taxon>
        <taxon>Arabidopsis</taxon>
    </lineage>
</organism>
<reference key="1">
    <citation type="journal article" date="1999" name="Nature">
        <title>Sequence and analysis of chromosome 4 of the plant Arabidopsis thaliana.</title>
        <authorList>
            <person name="Mayer K.F.X."/>
            <person name="Schueller C."/>
            <person name="Wambutt R."/>
            <person name="Murphy G."/>
            <person name="Volckaert G."/>
            <person name="Pohl T."/>
            <person name="Duesterhoeft A."/>
            <person name="Stiekema W."/>
            <person name="Entian K.-D."/>
            <person name="Terryn N."/>
            <person name="Harris B."/>
            <person name="Ansorge W."/>
            <person name="Brandt P."/>
            <person name="Grivell L.A."/>
            <person name="Rieger M."/>
            <person name="Weichselgartner M."/>
            <person name="de Simone V."/>
            <person name="Obermaier B."/>
            <person name="Mache R."/>
            <person name="Mueller M."/>
            <person name="Kreis M."/>
            <person name="Delseny M."/>
            <person name="Puigdomenech P."/>
            <person name="Watson M."/>
            <person name="Schmidtheini T."/>
            <person name="Reichert B."/>
            <person name="Portetelle D."/>
            <person name="Perez-Alonso M."/>
            <person name="Boutry M."/>
            <person name="Bancroft I."/>
            <person name="Vos P."/>
            <person name="Hoheisel J."/>
            <person name="Zimmermann W."/>
            <person name="Wedler H."/>
            <person name="Ridley P."/>
            <person name="Langham S.-A."/>
            <person name="McCullagh B."/>
            <person name="Bilham L."/>
            <person name="Robben J."/>
            <person name="van der Schueren J."/>
            <person name="Grymonprez B."/>
            <person name="Chuang Y.-J."/>
            <person name="Vandenbussche F."/>
            <person name="Braeken M."/>
            <person name="Weltjens I."/>
            <person name="Voet M."/>
            <person name="Bastiaens I."/>
            <person name="Aert R."/>
            <person name="Defoor E."/>
            <person name="Weitzenegger T."/>
            <person name="Bothe G."/>
            <person name="Ramsperger U."/>
            <person name="Hilbert H."/>
            <person name="Braun M."/>
            <person name="Holzer E."/>
            <person name="Brandt A."/>
            <person name="Peters S."/>
            <person name="van Staveren M."/>
            <person name="Dirkse W."/>
            <person name="Mooijman P."/>
            <person name="Klein Lankhorst R."/>
            <person name="Rose M."/>
            <person name="Hauf J."/>
            <person name="Koetter P."/>
            <person name="Berneiser S."/>
            <person name="Hempel S."/>
            <person name="Feldpausch M."/>
            <person name="Lamberth S."/>
            <person name="Van den Daele H."/>
            <person name="De Keyser A."/>
            <person name="Buysshaert C."/>
            <person name="Gielen J."/>
            <person name="Villarroel R."/>
            <person name="De Clercq R."/>
            <person name="van Montagu M."/>
            <person name="Rogers J."/>
            <person name="Cronin A."/>
            <person name="Quail M.A."/>
            <person name="Bray-Allen S."/>
            <person name="Clark L."/>
            <person name="Doggett J."/>
            <person name="Hall S."/>
            <person name="Kay M."/>
            <person name="Lennard N."/>
            <person name="McLay K."/>
            <person name="Mayes R."/>
            <person name="Pettett A."/>
            <person name="Rajandream M.A."/>
            <person name="Lyne M."/>
            <person name="Benes V."/>
            <person name="Rechmann S."/>
            <person name="Borkova D."/>
            <person name="Bloecker H."/>
            <person name="Scharfe M."/>
            <person name="Grimm M."/>
            <person name="Loehnert T.-H."/>
            <person name="Dose S."/>
            <person name="de Haan M."/>
            <person name="Maarse A.C."/>
            <person name="Schaefer M."/>
            <person name="Mueller-Auer S."/>
            <person name="Gabel C."/>
            <person name="Fuchs M."/>
            <person name="Fartmann B."/>
            <person name="Granderath K."/>
            <person name="Dauner D."/>
            <person name="Herzl A."/>
            <person name="Neumann S."/>
            <person name="Argiriou A."/>
            <person name="Vitale D."/>
            <person name="Liguori R."/>
            <person name="Piravandi E."/>
            <person name="Massenet O."/>
            <person name="Quigley F."/>
            <person name="Clabauld G."/>
            <person name="Muendlein A."/>
            <person name="Felber R."/>
            <person name="Schnabl S."/>
            <person name="Hiller R."/>
            <person name="Schmidt W."/>
            <person name="Lecharny A."/>
            <person name="Aubourg S."/>
            <person name="Chefdor F."/>
            <person name="Cooke R."/>
            <person name="Berger C."/>
            <person name="Monfort A."/>
            <person name="Casacuberta E."/>
            <person name="Gibbons T."/>
            <person name="Weber N."/>
            <person name="Vandenbol M."/>
            <person name="Bargues M."/>
            <person name="Terol J."/>
            <person name="Torres A."/>
            <person name="Perez-Perez A."/>
            <person name="Purnelle B."/>
            <person name="Bent E."/>
            <person name="Johnson S."/>
            <person name="Tacon D."/>
            <person name="Jesse T."/>
            <person name="Heijnen L."/>
            <person name="Schwarz S."/>
            <person name="Scholler P."/>
            <person name="Heber S."/>
            <person name="Francs P."/>
            <person name="Bielke C."/>
            <person name="Frishman D."/>
            <person name="Haase D."/>
            <person name="Lemcke K."/>
            <person name="Mewes H.-W."/>
            <person name="Stocker S."/>
            <person name="Zaccaria P."/>
            <person name="Bevan M."/>
            <person name="Wilson R.K."/>
            <person name="de la Bastide M."/>
            <person name="Habermann K."/>
            <person name="Parnell L."/>
            <person name="Dedhia N."/>
            <person name="Gnoj L."/>
            <person name="Schutz K."/>
            <person name="Huang E."/>
            <person name="Spiegel L."/>
            <person name="Sekhon M."/>
            <person name="Murray J."/>
            <person name="Sheet P."/>
            <person name="Cordes M."/>
            <person name="Abu-Threideh J."/>
            <person name="Stoneking T."/>
            <person name="Kalicki J."/>
            <person name="Graves T."/>
            <person name="Harmon G."/>
            <person name="Edwards J."/>
            <person name="Latreille P."/>
            <person name="Courtney L."/>
            <person name="Cloud J."/>
            <person name="Abbott A."/>
            <person name="Scott K."/>
            <person name="Johnson D."/>
            <person name="Minx P."/>
            <person name="Bentley D."/>
            <person name="Fulton B."/>
            <person name="Miller N."/>
            <person name="Greco T."/>
            <person name="Kemp K."/>
            <person name="Kramer J."/>
            <person name="Fulton L."/>
            <person name="Mardis E."/>
            <person name="Dante M."/>
            <person name="Pepin K."/>
            <person name="Hillier L.W."/>
            <person name="Nelson J."/>
            <person name="Spieth J."/>
            <person name="Ryan E."/>
            <person name="Andrews S."/>
            <person name="Geisel C."/>
            <person name="Layman D."/>
            <person name="Du H."/>
            <person name="Ali J."/>
            <person name="Berghoff A."/>
            <person name="Jones K."/>
            <person name="Drone K."/>
            <person name="Cotton M."/>
            <person name="Joshu C."/>
            <person name="Antonoiu B."/>
            <person name="Zidanic M."/>
            <person name="Strong C."/>
            <person name="Sun H."/>
            <person name="Lamar B."/>
            <person name="Yordan C."/>
            <person name="Ma P."/>
            <person name="Zhong J."/>
            <person name="Preston R."/>
            <person name="Vil D."/>
            <person name="Shekher M."/>
            <person name="Matero A."/>
            <person name="Shah R."/>
            <person name="Swaby I.K."/>
            <person name="O'Shaughnessy A."/>
            <person name="Rodriguez M."/>
            <person name="Hoffman J."/>
            <person name="Till S."/>
            <person name="Granat S."/>
            <person name="Shohdy N."/>
            <person name="Hasegawa A."/>
            <person name="Hameed A."/>
            <person name="Lodhi M."/>
            <person name="Johnson A."/>
            <person name="Chen E."/>
            <person name="Marra M.A."/>
            <person name="Martienssen R."/>
            <person name="McCombie W.R."/>
        </authorList>
    </citation>
    <scope>NUCLEOTIDE SEQUENCE [LARGE SCALE GENOMIC DNA]</scope>
    <source>
        <strain>cv. Columbia</strain>
    </source>
</reference>
<reference key="2">
    <citation type="journal article" date="2017" name="Plant J.">
        <title>Araport11: a complete reannotation of the Arabidopsis thaliana reference genome.</title>
        <authorList>
            <person name="Cheng C.Y."/>
            <person name="Krishnakumar V."/>
            <person name="Chan A.P."/>
            <person name="Thibaud-Nissen F."/>
            <person name="Schobel S."/>
            <person name="Town C.D."/>
        </authorList>
    </citation>
    <scope>GENOME REANNOTATION</scope>
    <source>
        <strain>cv. Columbia</strain>
    </source>
</reference>
<reference key="3">
    <citation type="journal article" date="2003" name="Science">
        <title>Empirical analysis of transcriptional activity in the Arabidopsis genome.</title>
        <authorList>
            <person name="Yamada K."/>
            <person name="Lim J."/>
            <person name="Dale J.M."/>
            <person name="Chen H."/>
            <person name="Shinn P."/>
            <person name="Palm C.J."/>
            <person name="Southwick A.M."/>
            <person name="Wu H.C."/>
            <person name="Kim C.J."/>
            <person name="Nguyen M."/>
            <person name="Pham P.K."/>
            <person name="Cheuk R.F."/>
            <person name="Karlin-Newmann G."/>
            <person name="Liu S.X."/>
            <person name="Lam B."/>
            <person name="Sakano H."/>
            <person name="Wu T."/>
            <person name="Yu G."/>
            <person name="Miranda M."/>
            <person name="Quach H.L."/>
            <person name="Tripp M."/>
            <person name="Chang C.H."/>
            <person name="Lee J.M."/>
            <person name="Toriumi M.J."/>
            <person name="Chan M.M."/>
            <person name="Tang C.C."/>
            <person name="Onodera C.S."/>
            <person name="Deng J.M."/>
            <person name="Akiyama K."/>
            <person name="Ansari Y."/>
            <person name="Arakawa T."/>
            <person name="Banh J."/>
            <person name="Banno F."/>
            <person name="Bowser L."/>
            <person name="Brooks S.Y."/>
            <person name="Carninci P."/>
            <person name="Chao Q."/>
            <person name="Choy N."/>
            <person name="Enju A."/>
            <person name="Goldsmith A.D."/>
            <person name="Gurjal M."/>
            <person name="Hansen N.F."/>
            <person name="Hayashizaki Y."/>
            <person name="Johnson-Hopson C."/>
            <person name="Hsuan V.W."/>
            <person name="Iida K."/>
            <person name="Karnes M."/>
            <person name="Khan S."/>
            <person name="Koesema E."/>
            <person name="Ishida J."/>
            <person name="Jiang P.X."/>
            <person name="Jones T."/>
            <person name="Kawai J."/>
            <person name="Kamiya A."/>
            <person name="Meyers C."/>
            <person name="Nakajima M."/>
            <person name="Narusaka M."/>
            <person name="Seki M."/>
            <person name="Sakurai T."/>
            <person name="Satou M."/>
            <person name="Tamse R."/>
            <person name="Vaysberg M."/>
            <person name="Wallender E.K."/>
            <person name="Wong C."/>
            <person name="Yamamura Y."/>
            <person name="Yuan S."/>
            <person name="Shinozaki K."/>
            <person name="Davis R.W."/>
            <person name="Theologis A."/>
            <person name="Ecker J.R."/>
        </authorList>
    </citation>
    <scope>NUCLEOTIDE SEQUENCE [LARGE SCALE MRNA]</scope>
    <source>
        <strain>cv. Columbia</strain>
    </source>
</reference>
<reference key="4">
    <citation type="journal article" date="2001" name="Plant Physiol.">
        <title>A superfamily of proteins with novel cysteine-rich repeats.</title>
        <authorList>
            <person name="Chen Z."/>
        </authorList>
    </citation>
    <scope>GENE FAMILY ORGANIZATION</scope>
    <scope>NOMENCLATURE</scope>
</reference>
<reference key="5">
    <citation type="journal article" date="2005" name="Plant Mol. Biol.">
        <title>Identification of NPR1-dependent and independent genes early induced by salicylic acid treatment in Arabidopsis.</title>
        <authorList>
            <person name="Blanco F."/>
            <person name="Garreton V."/>
            <person name="Frey N."/>
            <person name="Dominguez C."/>
            <person name="Perez-Acle T."/>
            <person name="van der Straeten D."/>
            <person name="Jordana X."/>
            <person name="Holuigue L."/>
        </authorList>
    </citation>
    <scope>INDUCTION</scope>
</reference>
<evidence type="ECO:0000255" key="1"/>
<evidence type="ECO:0000255" key="2">
    <source>
        <dbReference type="PROSITE-ProRule" id="PRU00806"/>
    </source>
</evidence>
<evidence type="ECO:0000269" key="3">
    <source>
    </source>
</evidence>
<evidence type="ECO:0000305" key="4"/>
<accession>O65469</accession>
<keyword id="KW-0325">Glycoprotein</keyword>
<keyword id="KW-0675">Receptor</keyword>
<keyword id="KW-1185">Reference proteome</keyword>
<keyword id="KW-0677">Repeat</keyword>
<keyword id="KW-0964">Secreted</keyword>
<keyword id="KW-0732">Signal</keyword>